<dbReference type="EMBL" id="AAHF01000009">
    <property type="protein sequence ID" value="EAL86999.1"/>
    <property type="molecule type" value="Genomic_DNA"/>
</dbReference>
<dbReference type="RefSeq" id="XP_749037.1">
    <property type="nucleotide sequence ID" value="XM_743944.1"/>
</dbReference>
<dbReference type="SMR" id="Q4WGE2"/>
<dbReference type="STRING" id="330879.Q4WGE2"/>
<dbReference type="GlyCosmos" id="Q4WGE2">
    <property type="glycosylation" value="1 site, No reported glycans"/>
</dbReference>
<dbReference type="EnsemblFungi" id="EAL86999">
    <property type="protein sequence ID" value="EAL86999"/>
    <property type="gene ID" value="AFUA_7G04730"/>
</dbReference>
<dbReference type="GeneID" id="3506290"/>
<dbReference type="KEGG" id="afm:AFUA_7G04730"/>
<dbReference type="VEuPathDB" id="FungiDB:Afu7g04730"/>
<dbReference type="eggNOG" id="KOG0254">
    <property type="taxonomic scope" value="Eukaryota"/>
</dbReference>
<dbReference type="HOGENOM" id="CLU_012970_1_0_1"/>
<dbReference type="InParanoid" id="Q4WGE2"/>
<dbReference type="OMA" id="AVWKNYR"/>
<dbReference type="OrthoDB" id="4078873at2759"/>
<dbReference type="Proteomes" id="UP000002530">
    <property type="component" value="Chromosome 7"/>
</dbReference>
<dbReference type="GO" id="GO:0005886">
    <property type="term" value="C:plasma membrane"/>
    <property type="evidence" value="ECO:0000318"/>
    <property type="project" value="GO_Central"/>
</dbReference>
<dbReference type="GO" id="GO:0022857">
    <property type="term" value="F:transmembrane transporter activity"/>
    <property type="evidence" value="ECO:0000318"/>
    <property type="project" value="GO_Central"/>
</dbReference>
<dbReference type="GO" id="GO:0006826">
    <property type="term" value="P:iron ion transport"/>
    <property type="evidence" value="ECO:0007669"/>
    <property type="project" value="UniProtKB-KW"/>
</dbReference>
<dbReference type="GO" id="GO:0055085">
    <property type="term" value="P:transmembrane transport"/>
    <property type="evidence" value="ECO:0000318"/>
    <property type="project" value="GO_Central"/>
</dbReference>
<dbReference type="FunFam" id="1.20.1250.20:FF:000335">
    <property type="entry name" value="Siderochrome iron transporter 2"/>
    <property type="match status" value="1"/>
</dbReference>
<dbReference type="FunFam" id="1.20.1250.20:FF:000284">
    <property type="entry name" value="Siderophore iron transporter mirB"/>
    <property type="match status" value="1"/>
</dbReference>
<dbReference type="Gene3D" id="1.20.1250.20">
    <property type="entry name" value="MFS general substrate transporter like domains"/>
    <property type="match status" value="2"/>
</dbReference>
<dbReference type="InterPro" id="IPR011701">
    <property type="entry name" value="MFS"/>
</dbReference>
<dbReference type="InterPro" id="IPR036259">
    <property type="entry name" value="MFS_trans_sf"/>
</dbReference>
<dbReference type="PANTHER" id="PTHR23501">
    <property type="entry name" value="MAJOR FACILITATOR SUPERFAMILY"/>
    <property type="match status" value="1"/>
</dbReference>
<dbReference type="PANTHER" id="PTHR23501:SF107">
    <property type="entry name" value="TRANSPORTER, PUTATIVE (AFU_ORTHOLOGUE AFUA_7G04730)-RELATED"/>
    <property type="match status" value="1"/>
</dbReference>
<dbReference type="Pfam" id="PF07690">
    <property type="entry name" value="MFS_1"/>
    <property type="match status" value="1"/>
</dbReference>
<dbReference type="SUPFAM" id="SSF103473">
    <property type="entry name" value="MFS general substrate transporter"/>
    <property type="match status" value="1"/>
</dbReference>
<accession>Q4WGE2</accession>
<organism>
    <name type="scientific">Aspergillus fumigatus (strain ATCC MYA-4609 / CBS 101355 / FGSC A1100 / Af293)</name>
    <name type="common">Neosartorya fumigata</name>
    <dbReference type="NCBI Taxonomy" id="330879"/>
    <lineage>
        <taxon>Eukaryota</taxon>
        <taxon>Fungi</taxon>
        <taxon>Dikarya</taxon>
        <taxon>Ascomycota</taxon>
        <taxon>Pezizomycotina</taxon>
        <taxon>Eurotiomycetes</taxon>
        <taxon>Eurotiomycetidae</taxon>
        <taxon>Eurotiales</taxon>
        <taxon>Aspergillaceae</taxon>
        <taxon>Aspergillus</taxon>
        <taxon>Aspergillus subgen. Fumigati</taxon>
    </lineage>
</organism>
<evidence type="ECO:0000255" key="1"/>
<evidence type="ECO:0000255" key="2">
    <source>
        <dbReference type="PROSITE-ProRule" id="PRU00498"/>
    </source>
</evidence>
<evidence type="ECO:0000256" key="3">
    <source>
        <dbReference type="SAM" id="MobiDB-lite"/>
    </source>
</evidence>
<evidence type="ECO:0000269" key="4">
    <source>
    </source>
</evidence>
<evidence type="ECO:0000303" key="5">
    <source>
    </source>
</evidence>
<evidence type="ECO:0000305" key="6"/>
<keyword id="KW-1003">Cell membrane</keyword>
<keyword id="KW-0325">Glycoprotein</keyword>
<keyword id="KW-0406">Ion transport</keyword>
<keyword id="KW-0408">Iron</keyword>
<keyword id="KW-0410">Iron transport</keyword>
<keyword id="KW-0472">Membrane</keyword>
<keyword id="KW-1185">Reference proteome</keyword>
<keyword id="KW-0812">Transmembrane</keyword>
<keyword id="KW-1133">Transmembrane helix</keyword>
<keyword id="KW-0813">Transport</keyword>
<comment type="function">
    <text evidence="4">Major facilitator transporter involved in ferrichrome (FC) uptake (PubMed:26929401).</text>
</comment>
<comment type="biophysicochemical properties">
    <kinetics>
        <KM evidence="4">0.26 uM for ferrichrome (FC) uptake</KM>
    </kinetics>
</comment>
<comment type="subcellular location">
    <subcellularLocation>
        <location evidence="4">Cell membrane</location>
        <topology evidence="1">Multi-pass membrane protein</topology>
    </subcellularLocation>
</comment>
<comment type="induction">
    <text evidence="4">Highly expressed under low-iron conditions and down-regulated under high-iron conditions (PubMed:26929401). Expression is regulated by hapX under low-iron conditions (PubMed:26929401).</text>
</comment>
<comment type="disruption phenotype">
    <text evidence="4">Leads to lower ferrichrome (FC) uptake activity, which is reduced to approximately 60% of the wild-type activity (PubMed:26929401).</text>
</comment>
<comment type="similarity">
    <text evidence="6">Belongs to the major facilitator superfamily.</text>
</comment>
<reference key="1">
    <citation type="journal article" date="2005" name="Nature">
        <title>Genomic sequence of the pathogenic and allergenic filamentous fungus Aspergillus fumigatus.</title>
        <authorList>
            <person name="Nierman W.C."/>
            <person name="Pain A."/>
            <person name="Anderson M.J."/>
            <person name="Wortman J.R."/>
            <person name="Kim H.S."/>
            <person name="Arroyo J."/>
            <person name="Berriman M."/>
            <person name="Abe K."/>
            <person name="Archer D.B."/>
            <person name="Bermejo C."/>
            <person name="Bennett J.W."/>
            <person name="Bowyer P."/>
            <person name="Chen D."/>
            <person name="Collins M."/>
            <person name="Coulsen R."/>
            <person name="Davies R."/>
            <person name="Dyer P.S."/>
            <person name="Farman M.L."/>
            <person name="Fedorova N."/>
            <person name="Fedorova N.D."/>
            <person name="Feldblyum T.V."/>
            <person name="Fischer R."/>
            <person name="Fosker N."/>
            <person name="Fraser A."/>
            <person name="Garcia J.L."/>
            <person name="Garcia M.J."/>
            <person name="Goble A."/>
            <person name="Goldman G.H."/>
            <person name="Gomi K."/>
            <person name="Griffith-Jones S."/>
            <person name="Gwilliam R."/>
            <person name="Haas B.J."/>
            <person name="Haas H."/>
            <person name="Harris D.E."/>
            <person name="Horiuchi H."/>
            <person name="Huang J."/>
            <person name="Humphray S."/>
            <person name="Jimenez J."/>
            <person name="Keller N."/>
            <person name="Khouri H."/>
            <person name="Kitamoto K."/>
            <person name="Kobayashi T."/>
            <person name="Konzack S."/>
            <person name="Kulkarni R."/>
            <person name="Kumagai T."/>
            <person name="Lafton A."/>
            <person name="Latge J.-P."/>
            <person name="Li W."/>
            <person name="Lord A."/>
            <person name="Lu C."/>
            <person name="Majoros W.H."/>
            <person name="May G.S."/>
            <person name="Miller B.L."/>
            <person name="Mohamoud Y."/>
            <person name="Molina M."/>
            <person name="Monod M."/>
            <person name="Mouyna I."/>
            <person name="Mulligan S."/>
            <person name="Murphy L.D."/>
            <person name="O'Neil S."/>
            <person name="Paulsen I."/>
            <person name="Penalva M.A."/>
            <person name="Pertea M."/>
            <person name="Price C."/>
            <person name="Pritchard B.L."/>
            <person name="Quail M.A."/>
            <person name="Rabbinowitsch E."/>
            <person name="Rawlins N."/>
            <person name="Rajandream M.A."/>
            <person name="Reichard U."/>
            <person name="Renauld H."/>
            <person name="Robson G.D."/>
            <person name="Rodriguez de Cordoba S."/>
            <person name="Rodriguez-Pena J.M."/>
            <person name="Ronning C.M."/>
            <person name="Rutter S."/>
            <person name="Salzberg S.L."/>
            <person name="Sanchez M."/>
            <person name="Sanchez-Ferrero J.C."/>
            <person name="Saunders D."/>
            <person name="Seeger K."/>
            <person name="Squares R."/>
            <person name="Squares S."/>
            <person name="Takeuchi M."/>
            <person name="Tekaia F."/>
            <person name="Turner G."/>
            <person name="Vazquez de Aldana C.R."/>
            <person name="Weidman J."/>
            <person name="White O."/>
            <person name="Woodward J.R."/>
            <person name="Yu J.-H."/>
            <person name="Fraser C.M."/>
            <person name="Galagan J.E."/>
            <person name="Asai K."/>
            <person name="Machida M."/>
            <person name="Hall N."/>
            <person name="Barrell B.G."/>
            <person name="Denning D.W."/>
        </authorList>
    </citation>
    <scope>NUCLEOTIDE SEQUENCE [LARGE SCALE GENOMIC DNA]</scope>
    <source>
        <strain>ATCC MYA-4609 / CBS 101355 / FGSC A1100 / Af293</strain>
    </source>
</reference>
<reference key="2">
    <citation type="journal article" date="2016" name="Biochem. J.">
        <title>Identification of ferrichrome- and ferrioxamine B-mediated iron uptake by Aspergillus fumigatus.</title>
        <authorList>
            <person name="Park Y.S."/>
            <person name="Kim J.Y."/>
            <person name="Yun C.W."/>
        </authorList>
    </citation>
    <scope>FUNCTION</scope>
    <scope>INDUCTION</scope>
    <scope>SUBCELLULAR LOCATION</scope>
    <scope>BIOPHYSICOCHEMICAL PROPERTIES</scope>
    <scope>DISRUPTION PHENOTYPE</scope>
</reference>
<proteinExistence type="evidence at protein level"/>
<name>SIT2_ASPFU</name>
<gene>
    <name evidence="5" type="primary">sit2</name>
    <name type="ORF">AFUA_7G04730</name>
</gene>
<sequence>MGLFGSFGARNKATPQVPPGAVAKAPEGTPKGPETNDQPDMDSSRLSLEARNEKEIEQHPNQVTADAHLGVQKVEAAALVWSKKAVWATYAWIWVCFFLLALQSGISGNVINNAYSGFMSAPQISTANILSSIIGGVLKLPIAKILNLWGRAEGFLVFVGVYTIGLIILAACNGPDSYAAGYVLFWIGYDAIYLILDVFVADTSGLRNRAFTFAFASTPFICTAFTAPLAASSFLRMTTWRWAYGAFAIIMPVALAPLAVVFKRYQLKAEKMGLYVRQPSGRTWAQSVAHYIHEFDIIGAFLLMAAWVLLLLPFSLASNGRAEYKSAAFIAMVIIGFCLFFAFAAWEKWFARVHFINYELLKQRTVLGACVMAATLYFSFYCWDLYFYNFCTVVYNLNAAMTGYMTQIYNVGSCFWGVVFGLWVRWTKHFKHTCLFFGLPLMILGAGLMIHFRGQSDDIGYVIMCQIFIAFGGGTLVIGEQMAVMASANREGVPMMLSFIGLFSSLGGAIGYAVAAAIYTNVFPGALESRLPADLKSNATSIYMGGYTVQQTYPMGSAARDAINYAWGRSQRFGAVAATCILILGIPAIAVWKNYNVNKHQNKGVMI</sequence>
<protein>
    <recommendedName>
        <fullName evidence="5">Siderochrome iron transporter 2</fullName>
    </recommendedName>
</protein>
<feature type="chain" id="PRO_0000444406" description="Siderochrome iron transporter 2">
    <location>
        <begin position="1"/>
        <end position="607"/>
    </location>
</feature>
<feature type="transmembrane region" description="Helical" evidence="1">
    <location>
        <begin position="86"/>
        <end position="106"/>
    </location>
</feature>
<feature type="transmembrane region" description="Helical" evidence="1">
    <location>
        <begin position="129"/>
        <end position="149"/>
    </location>
</feature>
<feature type="transmembrane region" description="Helical" evidence="1">
    <location>
        <begin position="152"/>
        <end position="172"/>
    </location>
</feature>
<feature type="transmembrane region" description="Helical" evidence="1">
    <location>
        <begin position="180"/>
        <end position="200"/>
    </location>
</feature>
<feature type="transmembrane region" description="Helical" evidence="1">
    <location>
        <begin position="210"/>
        <end position="230"/>
    </location>
</feature>
<feature type="transmembrane region" description="Helical" evidence="1">
    <location>
        <begin position="242"/>
        <end position="262"/>
    </location>
</feature>
<feature type="transmembrane region" description="Helical" evidence="1">
    <location>
        <begin position="297"/>
        <end position="317"/>
    </location>
</feature>
<feature type="transmembrane region" description="Helical" evidence="1">
    <location>
        <begin position="326"/>
        <end position="346"/>
    </location>
</feature>
<feature type="transmembrane region" description="Helical" evidence="1">
    <location>
        <begin position="367"/>
        <end position="387"/>
    </location>
</feature>
<feature type="transmembrane region" description="Helical" evidence="1">
    <location>
        <begin position="404"/>
        <end position="424"/>
    </location>
</feature>
<feature type="transmembrane region" description="Helical" evidence="1">
    <location>
        <begin position="432"/>
        <end position="452"/>
    </location>
</feature>
<feature type="transmembrane region" description="Helical" evidence="1">
    <location>
        <begin position="459"/>
        <end position="479"/>
    </location>
</feature>
<feature type="transmembrane region" description="Helical" evidence="1">
    <location>
        <begin position="499"/>
        <end position="519"/>
    </location>
</feature>
<feature type="transmembrane region" description="Helical" evidence="1">
    <location>
        <begin position="573"/>
        <end position="593"/>
    </location>
</feature>
<feature type="region of interest" description="Disordered" evidence="3">
    <location>
        <begin position="1"/>
        <end position="46"/>
    </location>
</feature>
<feature type="glycosylation site" description="N-linked (GlcNAc...) asparagine" evidence="2">
    <location>
        <position position="538"/>
    </location>
</feature>